<organism>
    <name type="scientific">Vibrio cholerae serotype O1 (strain ATCC 39315 / El Tor Inaba N16961)</name>
    <dbReference type="NCBI Taxonomy" id="243277"/>
    <lineage>
        <taxon>Bacteria</taxon>
        <taxon>Pseudomonadati</taxon>
        <taxon>Pseudomonadota</taxon>
        <taxon>Gammaproteobacteria</taxon>
        <taxon>Vibrionales</taxon>
        <taxon>Vibrionaceae</taxon>
        <taxon>Vibrio</taxon>
    </lineage>
</organism>
<evidence type="ECO:0000255" key="1">
    <source>
        <dbReference type="HAMAP-Rule" id="MF_01161"/>
    </source>
</evidence>
<proteinExistence type="inferred from homology"/>
<gene>
    <name evidence="1" type="primary">tilS</name>
    <name type="ordered locus">VC_2242</name>
</gene>
<reference key="1">
    <citation type="journal article" date="2000" name="Nature">
        <title>DNA sequence of both chromosomes of the cholera pathogen Vibrio cholerae.</title>
        <authorList>
            <person name="Heidelberg J.F."/>
            <person name="Eisen J.A."/>
            <person name="Nelson W.C."/>
            <person name="Clayton R.A."/>
            <person name="Gwinn M.L."/>
            <person name="Dodson R.J."/>
            <person name="Haft D.H."/>
            <person name="Hickey E.K."/>
            <person name="Peterson J.D."/>
            <person name="Umayam L.A."/>
            <person name="Gill S.R."/>
            <person name="Nelson K.E."/>
            <person name="Read T.D."/>
            <person name="Tettelin H."/>
            <person name="Richardson D.L."/>
            <person name="Ermolaeva M.D."/>
            <person name="Vamathevan J.J."/>
            <person name="Bass S."/>
            <person name="Qin H."/>
            <person name="Dragoi I."/>
            <person name="Sellers P."/>
            <person name="McDonald L.A."/>
            <person name="Utterback T.R."/>
            <person name="Fleischmann R.D."/>
            <person name="Nierman W.C."/>
            <person name="White O."/>
            <person name="Salzberg S.L."/>
            <person name="Smith H.O."/>
            <person name="Colwell R.R."/>
            <person name="Mekalanos J.J."/>
            <person name="Venter J.C."/>
            <person name="Fraser C.M."/>
        </authorList>
    </citation>
    <scope>NUCLEOTIDE SEQUENCE [LARGE SCALE GENOMIC DNA]</scope>
    <source>
        <strain>ATCC 39315 / El Tor Inaba N16961</strain>
    </source>
</reference>
<dbReference type="EC" id="6.3.4.19" evidence="1"/>
<dbReference type="EMBL" id="AE003852">
    <property type="protein sequence ID" value="AAF95386.1"/>
    <property type="molecule type" value="Genomic_DNA"/>
</dbReference>
<dbReference type="PIR" id="D82100">
    <property type="entry name" value="D82100"/>
</dbReference>
<dbReference type="RefSeq" id="NP_231873.1">
    <property type="nucleotide sequence ID" value="NC_002505.1"/>
</dbReference>
<dbReference type="RefSeq" id="WP_000342513.1">
    <property type="nucleotide sequence ID" value="NZ_LT906614.1"/>
</dbReference>
<dbReference type="SMR" id="Q9KPX0"/>
<dbReference type="STRING" id="243277.VC_2242"/>
<dbReference type="DNASU" id="2613164"/>
<dbReference type="EnsemblBacteria" id="AAF95386">
    <property type="protein sequence ID" value="AAF95386"/>
    <property type="gene ID" value="VC_2242"/>
</dbReference>
<dbReference type="KEGG" id="vch:VC_2242"/>
<dbReference type="PATRIC" id="fig|243277.26.peg.2139"/>
<dbReference type="eggNOG" id="COG0037">
    <property type="taxonomic scope" value="Bacteria"/>
</dbReference>
<dbReference type="HOGENOM" id="CLU_018869_2_0_6"/>
<dbReference type="Proteomes" id="UP000000584">
    <property type="component" value="Chromosome 1"/>
</dbReference>
<dbReference type="GO" id="GO:0005737">
    <property type="term" value="C:cytoplasm"/>
    <property type="evidence" value="ECO:0007669"/>
    <property type="project" value="UniProtKB-SubCell"/>
</dbReference>
<dbReference type="GO" id="GO:0005524">
    <property type="term" value="F:ATP binding"/>
    <property type="evidence" value="ECO:0007669"/>
    <property type="project" value="UniProtKB-UniRule"/>
</dbReference>
<dbReference type="GO" id="GO:0032267">
    <property type="term" value="F:tRNA(Ile)-lysidine synthase activity"/>
    <property type="evidence" value="ECO:0007669"/>
    <property type="project" value="UniProtKB-EC"/>
</dbReference>
<dbReference type="GO" id="GO:0006400">
    <property type="term" value="P:tRNA modification"/>
    <property type="evidence" value="ECO:0007669"/>
    <property type="project" value="UniProtKB-UniRule"/>
</dbReference>
<dbReference type="CDD" id="cd01992">
    <property type="entry name" value="TilS_N"/>
    <property type="match status" value="1"/>
</dbReference>
<dbReference type="Gene3D" id="1.20.59.20">
    <property type="match status" value="1"/>
</dbReference>
<dbReference type="Gene3D" id="3.40.50.620">
    <property type="entry name" value="HUPs"/>
    <property type="match status" value="1"/>
</dbReference>
<dbReference type="HAMAP" id="MF_01161">
    <property type="entry name" value="tRNA_Ile_lys_synt"/>
    <property type="match status" value="1"/>
</dbReference>
<dbReference type="InterPro" id="IPR012796">
    <property type="entry name" value="Lysidine-tRNA-synth_C"/>
</dbReference>
<dbReference type="InterPro" id="IPR014729">
    <property type="entry name" value="Rossmann-like_a/b/a_fold"/>
</dbReference>
<dbReference type="InterPro" id="IPR011063">
    <property type="entry name" value="TilS/TtcA_N"/>
</dbReference>
<dbReference type="InterPro" id="IPR012094">
    <property type="entry name" value="tRNA_Ile_lys_synt"/>
</dbReference>
<dbReference type="InterPro" id="IPR012795">
    <property type="entry name" value="tRNA_Ile_lys_synt_N"/>
</dbReference>
<dbReference type="InterPro" id="IPR015262">
    <property type="entry name" value="tRNA_Ile_lys_synt_subst-bd"/>
</dbReference>
<dbReference type="NCBIfam" id="TIGR02433">
    <property type="entry name" value="lysidine_TilS_C"/>
    <property type="match status" value="1"/>
</dbReference>
<dbReference type="NCBIfam" id="TIGR02432">
    <property type="entry name" value="lysidine_TilS_N"/>
    <property type="match status" value="1"/>
</dbReference>
<dbReference type="PANTHER" id="PTHR43033">
    <property type="entry name" value="TRNA(ILE)-LYSIDINE SYNTHASE-RELATED"/>
    <property type="match status" value="1"/>
</dbReference>
<dbReference type="PANTHER" id="PTHR43033:SF1">
    <property type="entry name" value="TRNA(ILE)-LYSIDINE SYNTHASE-RELATED"/>
    <property type="match status" value="1"/>
</dbReference>
<dbReference type="Pfam" id="PF01171">
    <property type="entry name" value="ATP_bind_3"/>
    <property type="match status" value="1"/>
</dbReference>
<dbReference type="Pfam" id="PF09179">
    <property type="entry name" value="TilS"/>
    <property type="match status" value="1"/>
</dbReference>
<dbReference type="Pfam" id="PF11734">
    <property type="entry name" value="TilS_C"/>
    <property type="match status" value="1"/>
</dbReference>
<dbReference type="SMART" id="SM00977">
    <property type="entry name" value="TilS_C"/>
    <property type="match status" value="1"/>
</dbReference>
<dbReference type="SUPFAM" id="SSF52402">
    <property type="entry name" value="Adenine nucleotide alpha hydrolases-like"/>
    <property type="match status" value="1"/>
</dbReference>
<dbReference type="SUPFAM" id="SSF82829">
    <property type="entry name" value="MesJ substrate recognition domain-like"/>
    <property type="match status" value="1"/>
</dbReference>
<dbReference type="SUPFAM" id="SSF56037">
    <property type="entry name" value="PheT/TilS domain"/>
    <property type="match status" value="1"/>
</dbReference>
<comment type="function">
    <text evidence="1">Ligates lysine onto the cytidine present at position 34 of the AUA codon-specific tRNA(Ile) that contains the anticodon CAU, in an ATP-dependent manner. Cytidine is converted to lysidine, thus changing the amino acid specificity of the tRNA from methionine to isoleucine.</text>
</comment>
<comment type="catalytic activity">
    <reaction evidence="1">
        <text>cytidine(34) in tRNA(Ile2) + L-lysine + ATP = lysidine(34) in tRNA(Ile2) + AMP + diphosphate + H(+)</text>
        <dbReference type="Rhea" id="RHEA:43744"/>
        <dbReference type="Rhea" id="RHEA-COMP:10625"/>
        <dbReference type="Rhea" id="RHEA-COMP:10670"/>
        <dbReference type="ChEBI" id="CHEBI:15378"/>
        <dbReference type="ChEBI" id="CHEBI:30616"/>
        <dbReference type="ChEBI" id="CHEBI:32551"/>
        <dbReference type="ChEBI" id="CHEBI:33019"/>
        <dbReference type="ChEBI" id="CHEBI:82748"/>
        <dbReference type="ChEBI" id="CHEBI:83665"/>
        <dbReference type="ChEBI" id="CHEBI:456215"/>
        <dbReference type="EC" id="6.3.4.19"/>
    </reaction>
</comment>
<comment type="subcellular location">
    <subcellularLocation>
        <location evidence="1">Cytoplasm</location>
    </subcellularLocation>
</comment>
<comment type="domain">
    <text>The N-terminal region contains the highly conserved SGGXDS motif, predicted to be a P-loop motif involved in ATP binding.</text>
</comment>
<comment type="similarity">
    <text evidence="1">Belongs to the tRNA(Ile)-lysidine synthase family.</text>
</comment>
<feature type="chain" id="PRO_0000181800" description="tRNA(Ile)-lysidine synthase">
    <location>
        <begin position="1"/>
        <end position="440"/>
    </location>
</feature>
<feature type="binding site" evidence="1">
    <location>
        <begin position="25"/>
        <end position="30"/>
    </location>
    <ligand>
        <name>ATP</name>
        <dbReference type="ChEBI" id="CHEBI:30616"/>
    </ligand>
</feature>
<name>TILS_VIBCH</name>
<keyword id="KW-0067">ATP-binding</keyword>
<keyword id="KW-0963">Cytoplasm</keyword>
<keyword id="KW-0436">Ligase</keyword>
<keyword id="KW-0547">Nucleotide-binding</keyword>
<keyword id="KW-1185">Reference proteome</keyword>
<keyword id="KW-0819">tRNA processing</keyword>
<accession>Q9KPX0</accession>
<protein>
    <recommendedName>
        <fullName evidence="1">tRNA(Ile)-lysidine synthase</fullName>
        <ecNumber evidence="1">6.3.4.19</ecNumber>
    </recommendedName>
    <alternativeName>
        <fullName evidence="1">tRNA(Ile)-2-lysyl-cytidine synthase</fullName>
    </alternativeName>
    <alternativeName>
        <fullName evidence="1">tRNA(Ile)-lysidine synthetase</fullName>
    </alternativeName>
</protein>
<sequence length="440" mass="49939">MDDLYLHFVQQLARYPFRKILLALSGGVDSQVLLALLARGRDEFGWDVTAVHVHHGLSPNADQWAQYCQRCCREVGMACQIEYVQLDVASGESIEKLAREARYRVLAPHVNAQTLLLLGQHADDQLETFLLALKRGSGPKGLAAMAAYAPFAEGHLLRPLLTVSRQHIEAYAKQHKLTWVIDESNADIRYERNFLRHQVTPVLTERWPSIRQAVQRSAELCAEQEALLQEFLAEALKKAITAEGGLSIAVLAEGSEGMRRQLIRAWFAHHRLPMPSRQHTERIWCEVALASEDANPKLKLNHIEVRRFQHCLYLVPPEKDLSGWRSALVPEQRLPLPQGLGHLQLTSKAGGNIKLPDDPSQLWVSFEPQGLEACPVGRVGSRKLKKLFQEYGVPSWRRRQTPILMYQNRVVCVADLFVDRDWSGQDCELVWFKSHDSVPK</sequence>